<feature type="chain" id="PRO_1000017234" description="5-methyltetrahydropteroyltriglutamate--homocysteine methyltransferase">
    <location>
        <begin position="1"/>
        <end position="754"/>
    </location>
</feature>
<feature type="active site" description="Proton donor" evidence="1">
    <location>
        <position position="694"/>
    </location>
</feature>
<feature type="binding site" evidence="1">
    <location>
        <begin position="15"/>
        <end position="18"/>
    </location>
    <ligand>
        <name>5-methyltetrahydropteroyltri-L-glutamate</name>
        <dbReference type="ChEBI" id="CHEBI:58207"/>
    </ligand>
</feature>
<feature type="binding site" evidence="1">
    <location>
        <position position="114"/>
    </location>
    <ligand>
        <name>5-methyltetrahydropteroyltri-L-glutamate</name>
        <dbReference type="ChEBI" id="CHEBI:58207"/>
    </ligand>
</feature>
<feature type="binding site" evidence="1">
    <location>
        <begin position="430"/>
        <end position="432"/>
    </location>
    <ligand>
        <name>L-homocysteine</name>
        <dbReference type="ChEBI" id="CHEBI:58199"/>
    </ligand>
</feature>
<feature type="binding site" evidence="1">
    <location>
        <begin position="430"/>
        <end position="432"/>
    </location>
    <ligand>
        <name>L-methionine</name>
        <dbReference type="ChEBI" id="CHEBI:57844"/>
    </ligand>
</feature>
<feature type="binding site" evidence="1">
    <location>
        <position position="483"/>
    </location>
    <ligand>
        <name>L-homocysteine</name>
        <dbReference type="ChEBI" id="CHEBI:58199"/>
    </ligand>
</feature>
<feature type="binding site" evidence="1">
    <location>
        <position position="483"/>
    </location>
    <ligand>
        <name>L-methionine</name>
        <dbReference type="ChEBI" id="CHEBI:57844"/>
    </ligand>
</feature>
<feature type="binding site" evidence="1">
    <location>
        <begin position="514"/>
        <end position="515"/>
    </location>
    <ligand>
        <name>5-methyltetrahydropteroyltri-L-glutamate</name>
        <dbReference type="ChEBI" id="CHEBI:58207"/>
    </ligand>
</feature>
<feature type="binding site" evidence="1">
    <location>
        <position position="560"/>
    </location>
    <ligand>
        <name>5-methyltetrahydropteroyltri-L-glutamate</name>
        <dbReference type="ChEBI" id="CHEBI:58207"/>
    </ligand>
</feature>
<feature type="binding site" evidence="1">
    <location>
        <position position="598"/>
    </location>
    <ligand>
        <name>L-homocysteine</name>
        <dbReference type="ChEBI" id="CHEBI:58199"/>
    </ligand>
</feature>
<feature type="binding site" evidence="1">
    <location>
        <position position="598"/>
    </location>
    <ligand>
        <name>L-methionine</name>
        <dbReference type="ChEBI" id="CHEBI:57844"/>
    </ligand>
</feature>
<feature type="binding site" evidence="1">
    <location>
        <position position="604"/>
    </location>
    <ligand>
        <name>5-methyltetrahydropteroyltri-L-glutamate</name>
        <dbReference type="ChEBI" id="CHEBI:58207"/>
    </ligand>
</feature>
<feature type="binding site" evidence="1">
    <location>
        <position position="641"/>
    </location>
    <ligand>
        <name>Zn(2+)</name>
        <dbReference type="ChEBI" id="CHEBI:29105"/>
        <note>catalytic</note>
    </ligand>
</feature>
<feature type="binding site" evidence="1">
    <location>
        <position position="643"/>
    </location>
    <ligand>
        <name>Zn(2+)</name>
        <dbReference type="ChEBI" id="CHEBI:29105"/>
        <note>catalytic</note>
    </ligand>
</feature>
<feature type="binding site" evidence="1">
    <location>
        <position position="665"/>
    </location>
    <ligand>
        <name>Zn(2+)</name>
        <dbReference type="ChEBI" id="CHEBI:29105"/>
        <note>catalytic</note>
    </ligand>
</feature>
<feature type="binding site" evidence="1">
    <location>
        <position position="726"/>
    </location>
    <ligand>
        <name>Zn(2+)</name>
        <dbReference type="ChEBI" id="CHEBI:29105"/>
        <note>catalytic</note>
    </ligand>
</feature>
<dbReference type="EC" id="2.1.1.14" evidence="1"/>
<dbReference type="EMBL" id="CP000768">
    <property type="protein sequence ID" value="ABS44267.1"/>
    <property type="molecule type" value="Genomic_DNA"/>
</dbReference>
<dbReference type="SMR" id="A7H2H6"/>
<dbReference type="KEGG" id="cjd:JJD26997_0528"/>
<dbReference type="HOGENOM" id="CLU_013175_0_0_7"/>
<dbReference type="UniPathway" id="UPA00051">
    <property type="reaction ID" value="UER00082"/>
</dbReference>
<dbReference type="Proteomes" id="UP000002302">
    <property type="component" value="Chromosome"/>
</dbReference>
<dbReference type="GO" id="GO:0003871">
    <property type="term" value="F:5-methyltetrahydropteroyltriglutamate-homocysteine S-methyltransferase activity"/>
    <property type="evidence" value="ECO:0007669"/>
    <property type="project" value="UniProtKB-UniRule"/>
</dbReference>
<dbReference type="GO" id="GO:0008270">
    <property type="term" value="F:zinc ion binding"/>
    <property type="evidence" value="ECO:0007669"/>
    <property type="project" value="InterPro"/>
</dbReference>
<dbReference type="GO" id="GO:0009086">
    <property type="term" value="P:methionine biosynthetic process"/>
    <property type="evidence" value="ECO:0007669"/>
    <property type="project" value="UniProtKB-UniRule"/>
</dbReference>
<dbReference type="GO" id="GO:0032259">
    <property type="term" value="P:methylation"/>
    <property type="evidence" value="ECO:0007669"/>
    <property type="project" value="UniProtKB-KW"/>
</dbReference>
<dbReference type="CDD" id="cd03311">
    <property type="entry name" value="CIMS_C_terminal_like"/>
    <property type="match status" value="1"/>
</dbReference>
<dbReference type="CDD" id="cd03312">
    <property type="entry name" value="CIMS_N_terminal_like"/>
    <property type="match status" value="1"/>
</dbReference>
<dbReference type="Gene3D" id="3.20.20.210">
    <property type="match status" value="2"/>
</dbReference>
<dbReference type="HAMAP" id="MF_00172">
    <property type="entry name" value="Meth_synth"/>
    <property type="match status" value="1"/>
</dbReference>
<dbReference type="InterPro" id="IPR013215">
    <property type="entry name" value="Cbl-indep_Met_Synth_N"/>
</dbReference>
<dbReference type="InterPro" id="IPR006276">
    <property type="entry name" value="Cobalamin-indep_Met_synthase"/>
</dbReference>
<dbReference type="InterPro" id="IPR002629">
    <property type="entry name" value="Met_Synth_C/arc"/>
</dbReference>
<dbReference type="InterPro" id="IPR038071">
    <property type="entry name" value="UROD/MetE-like_sf"/>
</dbReference>
<dbReference type="NCBIfam" id="TIGR01371">
    <property type="entry name" value="met_syn_B12ind"/>
    <property type="match status" value="1"/>
</dbReference>
<dbReference type="NCBIfam" id="NF003556">
    <property type="entry name" value="PRK05222.1"/>
    <property type="match status" value="1"/>
</dbReference>
<dbReference type="PANTHER" id="PTHR30519">
    <property type="entry name" value="5-METHYLTETRAHYDROPTEROYLTRIGLUTAMATE--HOMOCYSTEINE METHYLTRANSFERASE"/>
    <property type="match status" value="1"/>
</dbReference>
<dbReference type="Pfam" id="PF08267">
    <property type="entry name" value="Meth_synt_1"/>
    <property type="match status" value="1"/>
</dbReference>
<dbReference type="Pfam" id="PF01717">
    <property type="entry name" value="Meth_synt_2"/>
    <property type="match status" value="1"/>
</dbReference>
<dbReference type="PIRSF" id="PIRSF000382">
    <property type="entry name" value="MeTrfase_B12_ind"/>
    <property type="match status" value="1"/>
</dbReference>
<dbReference type="SUPFAM" id="SSF51726">
    <property type="entry name" value="UROD/MetE-like"/>
    <property type="match status" value="2"/>
</dbReference>
<comment type="function">
    <text evidence="1">Catalyzes the transfer of a methyl group from 5-methyltetrahydrofolate to homocysteine resulting in methionine formation.</text>
</comment>
<comment type="catalytic activity">
    <reaction evidence="1">
        <text>5-methyltetrahydropteroyltri-L-glutamate + L-homocysteine = tetrahydropteroyltri-L-glutamate + L-methionine</text>
        <dbReference type="Rhea" id="RHEA:21196"/>
        <dbReference type="ChEBI" id="CHEBI:57844"/>
        <dbReference type="ChEBI" id="CHEBI:58140"/>
        <dbReference type="ChEBI" id="CHEBI:58199"/>
        <dbReference type="ChEBI" id="CHEBI:58207"/>
        <dbReference type="EC" id="2.1.1.14"/>
    </reaction>
</comment>
<comment type="cofactor">
    <cofactor evidence="1">
        <name>Zn(2+)</name>
        <dbReference type="ChEBI" id="CHEBI:29105"/>
    </cofactor>
    <text evidence="1">Binds 1 zinc ion per subunit.</text>
</comment>
<comment type="pathway">
    <text evidence="1">Amino-acid biosynthesis; L-methionine biosynthesis via de novo pathway; L-methionine from L-homocysteine (MetE route): step 1/1.</text>
</comment>
<comment type="similarity">
    <text evidence="1">Belongs to the vitamin-B12 independent methionine synthase family.</text>
</comment>
<sequence>MKNSIISYPRIGANRELKFAIEKYFKAQSSKEELLETAKNLRARHWKDIQNAGIDFIPSNDFSLYDNVLDTAVLFNIVHTKYKNLNLDALDEYFAQSRGYQGENGDVTALAMKKWFNTNYHYLVPECDDASIIALTGDKIFKEYLEAKELGIESKPVLIGIFTLFKLIAFKDKKTQKLAKEKLLNAYIELFDKLNELKVTWLELDEPYLVYDLSKEDIALFEEFYQELLNHKKDLKILLQSYFGDLRDIYPKLLESKFDALGLDFIEGKQSLALVQQYGFAKDKILFAGLINGKNIYANDYAKSLKLIKELQKYTQNIILNTSCSLLHVPYSTEFESKLDPSYLKLFAFAKEKLQELKDLKEILNSSEENPLFKANQELFKNIPERLDEKVKARLKALKKEDFTRTPSFKERALIQKEFLKLPLLPTTTIGSFPQSADVRSNRLAFKQKKISAQNYTEFNQQKIKECIQIQEEIGLDVLVHGEFERNDMVEYFGENLKGFLFTQNGWVQSYGTRCVKPPIIWGDVSRTKPITLACSKFAQSLSQKIVKGMLTGPVTILNWSFPREDISLKESTEQIALAIRDEVLDLENAGIKIIQIDEAALREKLPLRKSDWHSEYLDWAIPAFNLVHSGVKAKTQIHTHMCYSEFSDILKEIDAMDADVISFEASRSNLSLLDTLKAVHFKTEVGPGVYDIHSPRVPSVEELSLTIEKILNKLPKEQIWINPDCGLKTRAYEEVIASLKNLVTATQKIRKQL</sequence>
<evidence type="ECO:0000255" key="1">
    <source>
        <dbReference type="HAMAP-Rule" id="MF_00172"/>
    </source>
</evidence>
<accession>A7H2H6</accession>
<gene>
    <name evidence="1" type="primary">metE</name>
    <name type="ordered locus">JJD26997_0528</name>
</gene>
<protein>
    <recommendedName>
        <fullName evidence="1">5-methyltetrahydropteroyltriglutamate--homocysteine methyltransferase</fullName>
        <ecNumber evidence="1">2.1.1.14</ecNumber>
    </recommendedName>
    <alternativeName>
        <fullName evidence="1">Cobalamin-independent methionine synthase</fullName>
    </alternativeName>
    <alternativeName>
        <fullName evidence="1">Methionine synthase, vitamin-B12 independent isozyme</fullName>
    </alternativeName>
</protein>
<keyword id="KW-0028">Amino-acid biosynthesis</keyword>
<keyword id="KW-0479">Metal-binding</keyword>
<keyword id="KW-0486">Methionine biosynthesis</keyword>
<keyword id="KW-0489">Methyltransferase</keyword>
<keyword id="KW-0677">Repeat</keyword>
<keyword id="KW-0808">Transferase</keyword>
<keyword id="KW-0862">Zinc</keyword>
<organism>
    <name type="scientific">Campylobacter jejuni subsp. doylei (strain ATCC BAA-1458 / RM4099 / 269.97)</name>
    <dbReference type="NCBI Taxonomy" id="360109"/>
    <lineage>
        <taxon>Bacteria</taxon>
        <taxon>Pseudomonadati</taxon>
        <taxon>Campylobacterota</taxon>
        <taxon>Epsilonproteobacteria</taxon>
        <taxon>Campylobacterales</taxon>
        <taxon>Campylobacteraceae</taxon>
        <taxon>Campylobacter</taxon>
    </lineage>
</organism>
<reference key="1">
    <citation type="submission" date="2007-07" db="EMBL/GenBank/DDBJ databases">
        <title>Complete genome sequence of Campylobacter jejuni subsp doylei 269.97 isolated from human blood.</title>
        <authorList>
            <person name="Fouts D.E."/>
            <person name="Mongodin E.F."/>
            <person name="Puiu D."/>
            <person name="Sebastian Y."/>
            <person name="Miller W.G."/>
            <person name="Mandrell R.E."/>
            <person name="Lastovica A.J."/>
            <person name="Nelson K.E."/>
        </authorList>
    </citation>
    <scope>NUCLEOTIDE SEQUENCE [LARGE SCALE GENOMIC DNA]</scope>
    <source>
        <strain>ATCC BAA-1458 / RM4099 / 269.97</strain>
    </source>
</reference>
<proteinExistence type="inferred from homology"/>
<name>METE_CAMJD</name>